<sequence>MTALPSPDRPRILVANDDGIFSPGIKALALALADVGDVVVVAPDVEQSAVGHGITIRRPLRFKHTASAGFGTLPAYRVDGTPADCVVLGVHLLGRPDLVVSGINLGSNLGDDLTHSGTVAAAIEGLALGLPSIAFSQQGNGGGEYSFTAGAAYAARLARAVLAKGLPPRVLLNVNFPAGLPRGVRITKVGEHRWEDSIITRHDPEGREYHWVAGQSRAADAHDPDTDYGAVQAGYVSVTPVRLDLTARDLLGELAGYVPEI</sequence>
<evidence type="ECO:0000255" key="1">
    <source>
        <dbReference type="HAMAP-Rule" id="MF_00060"/>
    </source>
</evidence>
<feature type="chain" id="PRO_0000335259" description="5'-nucleotidase SurE">
    <location>
        <begin position="1"/>
        <end position="261"/>
    </location>
</feature>
<feature type="binding site" evidence="1">
    <location>
        <position position="17"/>
    </location>
    <ligand>
        <name>a divalent metal cation</name>
        <dbReference type="ChEBI" id="CHEBI:60240"/>
    </ligand>
</feature>
<feature type="binding site" evidence="1">
    <location>
        <position position="18"/>
    </location>
    <ligand>
        <name>a divalent metal cation</name>
        <dbReference type="ChEBI" id="CHEBI:60240"/>
    </ligand>
</feature>
<feature type="binding site" evidence="1">
    <location>
        <position position="48"/>
    </location>
    <ligand>
        <name>a divalent metal cation</name>
        <dbReference type="ChEBI" id="CHEBI:60240"/>
    </ligand>
</feature>
<feature type="binding site" evidence="1">
    <location>
        <position position="104"/>
    </location>
    <ligand>
        <name>a divalent metal cation</name>
        <dbReference type="ChEBI" id="CHEBI:60240"/>
    </ligand>
</feature>
<reference key="1">
    <citation type="submission" date="2006-04" db="EMBL/GenBank/DDBJ databases">
        <title>Complete sequence of chromosome of Deinococcus geothermalis DSM 11300.</title>
        <authorList>
            <person name="Copeland A."/>
            <person name="Lucas S."/>
            <person name="Lapidus A."/>
            <person name="Barry K."/>
            <person name="Detter J.C."/>
            <person name="Glavina del Rio T."/>
            <person name="Hammon N."/>
            <person name="Israni S."/>
            <person name="Dalin E."/>
            <person name="Tice H."/>
            <person name="Pitluck S."/>
            <person name="Brettin T."/>
            <person name="Bruce D."/>
            <person name="Han C."/>
            <person name="Tapia R."/>
            <person name="Saunders E."/>
            <person name="Gilna P."/>
            <person name="Schmutz J."/>
            <person name="Larimer F."/>
            <person name="Land M."/>
            <person name="Hauser L."/>
            <person name="Kyrpides N."/>
            <person name="Kim E."/>
            <person name="Daly M.J."/>
            <person name="Fredrickson J.K."/>
            <person name="Makarova K.S."/>
            <person name="Gaidamakova E.K."/>
            <person name="Zhai M."/>
            <person name="Richardson P."/>
        </authorList>
    </citation>
    <scope>NUCLEOTIDE SEQUENCE [LARGE SCALE GENOMIC DNA]</scope>
    <source>
        <strain>DSM 11300 / CIP 105573 / AG-3a</strain>
    </source>
</reference>
<dbReference type="EC" id="3.1.3.5" evidence="1"/>
<dbReference type="EMBL" id="CP000359">
    <property type="protein sequence ID" value="ABF44343.1"/>
    <property type="molecule type" value="Genomic_DNA"/>
</dbReference>
<dbReference type="RefSeq" id="WP_011529190.1">
    <property type="nucleotide sequence ID" value="NC_008025.1"/>
</dbReference>
<dbReference type="SMR" id="Q1J2E1"/>
<dbReference type="STRING" id="319795.Dgeo_0040"/>
<dbReference type="KEGG" id="dge:Dgeo_0040"/>
<dbReference type="eggNOG" id="COG0496">
    <property type="taxonomic scope" value="Bacteria"/>
</dbReference>
<dbReference type="HOGENOM" id="CLU_045192_1_3_0"/>
<dbReference type="Proteomes" id="UP000002431">
    <property type="component" value="Chromosome"/>
</dbReference>
<dbReference type="GO" id="GO:0005737">
    <property type="term" value="C:cytoplasm"/>
    <property type="evidence" value="ECO:0007669"/>
    <property type="project" value="UniProtKB-SubCell"/>
</dbReference>
<dbReference type="GO" id="GO:0008254">
    <property type="term" value="F:3'-nucleotidase activity"/>
    <property type="evidence" value="ECO:0007669"/>
    <property type="project" value="TreeGrafter"/>
</dbReference>
<dbReference type="GO" id="GO:0008253">
    <property type="term" value="F:5'-nucleotidase activity"/>
    <property type="evidence" value="ECO:0007669"/>
    <property type="project" value="UniProtKB-UniRule"/>
</dbReference>
<dbReference type="GO" id="GO:0004309">
    <property type="term" value="F:exopolyphosphatase activity"/>
    <property type="evidence" value="ECO:0007669"/>
    <property type="project" value="TreeGrafter"/>
</dbReference>
<dbReference type="GO" id="GO:0046872">
    <property type="term" value="F:metal ion binding"/>
    <property type="evidence" value="ECO:0007669"/>
    <property type="project" value="UniProtKB-UniRule"/>
</dbReference>
<dbReference type="GO" id="GO:0000166">
    <property type="term" value="F:nucleotide binding"/>
    <property type="evidence" value="ECO:0007669"/>
    <property type="project" value="UniProtKB-KW"/>
</dbReference>
<dbReference type="FunFam" id="3.40.1210.10:FF:000001">
    <property type="entry name" value="5'/3'-nucleotidase SurE"/>
    <property type="match status" value="1"/>
</dbReference>
<dbReference type="Gene3D" id="3.40.1210.10">
    <property type="entry name" value="Survival protein SurE-like phosphatase/nucleotidase"/>
    <property type="match status" value="1"/>
</dbReference>
<dbReference type="HAMAP" id="MF_00060">
    <property type="entry name" value="SurE"/>
    <property type="match status" value="1"/>
</dbReference>
<dbReference type="InterPro" id="IPR030048">
    <property type="entry name" value="SurE"/>
</dbReference>
<dbReference type="InterPro" id="IPR002828">
    <property type="entry name" value="SurE-like_Pase/nucleotidase"/>
</dbReference>
<dbReference type="InterPro" id="IPR036523">
    <property type="entry name" value="SurE-like_sf"/>
</dbReference>
<dbReference type="NCBIfam" id="NF001490">
    <property type="entry name" value="PRK00346.1-4"/>
    <property type="match status" value="1"/>
</dbReference>
<dbReference type="NCBIfam" id="TIGR00087">
    <property type="entry name" value="surE"/>
    <property type="match status" value="1"/>
</dbReference>
<dbReference type="PANTHER" id="PTHR30457">
    <property type="entry name" value="5'-NUCLEOTIDASE SURE"/>
    <property type="match status" value="1"/>
</dbReference>
<dbReference type="PANTHER" id="PTHR30457:SF12">
    <property type="entry name" value="5'_3'-NUCLEOTIDASE SURE"/>
    <property type="match status" value="1"/>
</dbReference>
<dbReference type="Pfam" id="PF01975">
    <property type="entry name" value="SurE"/>
    <property type="match status" value="1"/>
</dbReference>
<dbReference type="SUPFAM" id="SSF64167">
    <property type="entry name" value="SurE-like"/>
    <property type="match status" value="1"/>
</dbReference>
<proteinExistence type="inferred from homology"/>
<name>SURE_DEIGD</name>
<accession>Q1J2E1</accession>
<organism>
    <name type="scientific">Deinococcus geothermalis (strain DSM 11300 / CIP 105573 / AG-3a)</name>
    <dbReference type="NCBI Taxonomy" id="319795"/>
    <lineage>
        <taxon>Bacteria</taxon>
        <taxon>Thermotogati</taxon>
        <taxon>Deinococcota</taxon>
        <taxon>Deinococci</taxon>
        <taxon>Deinococcales</taxon>
        <taxon>Deinococcaceae</taxon>
        <taxon>Deinococcus</taxon>
    </lineage>
</organism>
<comment type="function">
    <text evidence="1">Nucleotidase that shows phosphatase activity on nucleoside 5'-monophosphates.</text>
</comment>
<comment type="catalytic activity">
    <reaction evidence="1">
        <text>a ribonucleoside 5'-phosphate + H2O = a ribonucleoside + phosphate</text>
        <dbReference type="Rhea" id="RHEA:12484"/>
        <dbReference type="ChEBI" id="CHEBI:15377"/>
        <dbReference type="ChEBI" id="CHEBI:18254"/>
        <dbReference type="ChEBI" id="CHEBI:43474"/>
        <dbReference type="ChEBI" id="CHEBI:58043"/>
        <dbReference type="EC" id="3.1.3.5"/>
    </reaction>
</comment>
<comment type="cofactor">
    <cofactor evidence="1">
        <name>a divalent metal cation</name>
        <dbReference type="ChEBI" id="CHEBI:60240"/>
    </cofactor>
    <text evidence="1">Binds 1 divalent metal cation per subunit.</text>
</comment>
<comment type="subcellular location">
    <subcellularLocation>
        <location evidence="1">Cytoplasm</location>
    </subcellularLocation>
</comment>
<comment type="similarity">
    <text evidence="1">Belongs to the SurE nucleotidase family.</text>
</comment>
<keyword id="KW-0963">Cytoplasm</keyword>
<keyword id="KW-0378">Hydrolase</keyword>
<keyword id="KW-0479">Metal-binding</keyword>
<keyword id="KW-0547">Nucleotide-binding</keyword>
<protein>
    <recommendedName>
        <fullName evidence="1">5'-nucleotidase SurE</fullName>
        <ecNumber evidence="1">3.1.3.5</ecNumber>
    </recommendedName>
    <alternativeName>
        <fullName evidence="1">Nucleoside 5'-monophosphate phosphohydrolase</fullName>
    </alternativeName>
</protein>
<gene>
    <name evidence="1" type="primary">surE</name>
    <name type="ordered locus">Dgeo_0040</name>
</gene>